<dbReference type="EMBL" id="CP000387">
    <property type="protein sequence ID" value="ABN43493.1"/>
    <property type="molecule type" value="Genomic_DNA"/>
</dbReference>
<dbReference type="RefSeq" id="WP_002920493.1">
    <property type="nucleotide sequence ID" value="NC_009009.1"/>
</dbReference>
<dbReference type="RefSeq" id="YP_001034043.1">
    <property type="nucleotide sequence ID" value="NC_009009.1"/>
</dbReference>
<dbReference type="SMR" id="A3CJY8"/>
<dbReference type="STRING" id="388919.SSA_0025"/>
<dbReference type="KEGG" id="ssa:SSA_0025"/>
<dbReference type="PATRIC" id="fig|388919.9.peg.23"/>
<dbReference type="eggNOG" id="COG1381">
    <property type="taxonomic scope" value="Bacteria"/>
</dbReference>
<dbReference type="HOGENOM" id="CLU_066632_4_0_9"/>
<dbReference type="OrthoDB" id="9797083at2"/>
<dbReference type="Proteomes" id="UP000002148">
    <property type="component" value="Chromosome"/>
</dbReference>
<dbReference type="GO" id="GO:0043590">
    <property type="term" value="C:bacterial nucleoid"/>
    <property type="evidence" value="ECO:0007669"/>
    <property type="project" value="TreeGrafter"/>
</dbReference>
<dbReference type="GO" id="GO:0006310">
    <property type="term" value="P:DNA recombination"/>
    <property type="evidence" value="ECO:0007669"/>
    <property type="project" value="UniProtKB-UniRule"/>
</dbReference>
<dbReference type="GO" id="GO:0006302">
    <property type="term" value="P:double-strand break repair"/>
    <property type="evidence" value="ECO:0007669"/>
    <property type="project" value="TreeGrafter"/>
</dbReference>
<dbReference type="Gene3D" id="2.40.50.140">
    <property type="entry name" value="Nucleic acid-binding proteins"/>
    <property type="match status" value="1"/>
</dbReference>
<dbReference type="Gene3D" id="1.20.1440.120">
    <property type="entry name" value="Recombination protein O, C-terminal domain"/>
    <property type="match status" value="1"/>
</dbReference>
<dbReference type="HAMAP" id="MF_00201">
    <property type="entry name" value="RecO"/>
    <property type="match status" value="1"/>
</dbReference>
<dbReference type="InterPro" id="IPR037278">
    <property type="entry name" value="ARFGAP/RecO"/>
</dbReference>
<dbReference type="InterPro" id="IPR022572">
    <property type="entry name" value="DNA_rep/recomb_RecO_N"/>
</dbReference>
<dbReference type="InterPro" id="IPR012340">
    <property type="entry name" value="NA-bd_OB-fold"/>
</dbReference>
<dbReference type="InterPro" id="IPR003717">
    <property type="entry name" value="RecO"/>
</dbReference>
<dbReference type="InterPro" id="IPR042242">
    <property type="entry name" value="RecO_C"/>
</dbReference>
<dbReference type="NCBIfam" id="TIGR00613">
    <property type="entry name" value="reco"/>
    <property type="match status" value="1"/>
</dbReference>
<dbReference type="PANTHER" id="PTHR33991">
    <property type="entry name" value="DNA REPAIR PROTEIN RECO"/>
    <property type="match status" value="1"/>
</dbReference>
<dbReference type="PANTHER" id="PTHR33991:SF1">
    <property type="entry name" value="DNA REPAIR PROTEIN RECO"/>
    <property type="match status" value="1"/>
</dbReference>
<dbReference type="Pfam" id="PF02565">
    <property type="entry name" value="RecO_C"/>
    <property type="match status" value="1"/>
</dbReference>
<dbReference type="Pfam" id="PF11967">
    <property type="entry name" value="RecO_N"/>
    <property type="match status" value="1"/>
</dbReference>
<dbReference type="SUPFAM" id="SSF57863">
    <property type="entry name" value="ArfGap/RecO-like zinc finger"/>
    <property type="match status" value="1"/>
</dbReference>
<dbReference type="SUPFAM" id="SSF50249">
    <property type="entry name" value="Nucleic acid-binding proteins"/>
    <property type="match status" value="1"/>
</dbReference>
<organism>
    <name type="scientific">Streptococcus sanguinis (strain SK36)</name>
    <dbReference type="NCBI Taxonomy" id="388919"/>
    <lineage>
        <taxon>Bacteria</taxon>
        <taxon>Bacillati</taxon>
        <taxon>Bacillota</taxon>
        <taxon>Bacilli</taxon>
        <taxon>Lactobacillales</taxon>
        <taxon>Streptococcaceae</taxon>
        <taxon>Streptococcus</taxon>
    </lineage>
</organism>
<comment type="function">
    <text evidence="1">Involved in DNA repair and RecF pathway recombination.</text>
</comment>
<comment type="similarity">
    <text evidence="1">Belongs to the RecO family.</text>
</comment>
<protein>
    <recommendedName>
        <fullName evidence="1">DNA repair protein RecO</fullName>
    </recommendedName>
    <alternativeName>
        <fullName evidence="1">Recombination protein O</fullName>
    </alternativeName>
</protein>
<keyword id="KW-0227">DNA damage</keyword>
<keyword id="KW-0233">DNA recombination</keyword>
<keyword id="KW-0234">DNA repair</keyword>
<keyword id="KW-1185">Reference proteome</keyword>
<reference key="1">
    <citation type="journal article" date="2007" name="J. Bacteriol.">
        <title>Genome of the opportunistic pathogen Streptococcus sanguinis.</title>
        <authorList>
            <person name="Xu P."/>
            <person name="Alves J.M."/>
            <person name="Kitten T."/>
            <person name="Brown A."/>
            <person name="Chen Z."/>
            <person name="Ozaki L.S."/>
            <person name="Manque P."/>
            <person name="Ge X."/>
            <person name="Serrano M.G."/>
            <person name="Puiu D."/>
            <person name="Hendricks S."/>
            <person name="Wang Y."/>
            <person name="Chaplin M.D."/>
            <person name="Akan D."/>
            <person name="Paik S."/>
            <person name="Peterson D.L."/>
            <person name="Macrina F.L."/>
            <person name="Buck G.A."/>
        </authorList>
    </citation>
    <scope>NUCLEOTIDE SEQUENCE [LARGE SCALE GENOMIC DNA]</scope>
    <source>
        <strain>SK36</strain>
    </source>
</reference>
<sequence>MLKSLTSQGLVLYNRNFREDDKLVKIFTEQAGKRMFFVKHAGKSKLAPVIQPLTAANLLMKINDDGLSYIEDYQDVVTYHRINEDLFIMAYASYVAALADASLQDNQPDPALFAFLQKTLELMNNGLDYEVLTNIFEIQILSRFGVSLNFHDCAFCHRTGLPFDFSFKYSGVLCPDHYHQDERRCHLNPNLPFLLDQFQAVRFSELETISLKPDIKKQLRDFIDLLYDEYVGIHLKSKKFIDSLGDWGSILKDKNEE</sequence>
<accession>A3CJY8</accession>
<proteinExistence type="inferred from homology"/>
<name>RECO_STRSV</name>
<evidence type="ECO:0000255" key="1">
    <source>
        <dbReference type="HAMAP-Rule" id="MF_00201"/>
    </source>
</evidence>
<feature type="chain" id="PRO_1000012162" description="DNA repair protein RecO">
    <location>
        <begin position="1"/>
        <end position="257"/>
    </location>
</feature>
<gene>
    <name evidence="1" type="primary">recO</name>
    <name type="ordered locus">SSA_0025</name>
</gene>